<name>AROC_GEOKA</name>
<organism>
    <name type="scientific">Geobacillus kaustophilus (strain HTA426)</name>
    <dbReference type="NCBI Taxonomy" id="235909"/>
    <lineage>
        <taxon>Bacteria</taxon>
        <taxon>Bacillati</taxon>
        <taxon>Bacillota</taxon>
        <taxon>Bacilli</taxon>
        <taxon>Bacillales</taxon>
        <taxon>Anoxybacillaceae</taxon>
        <taxon>Geobacillus</taxon>
        <taxon>Geobacillus thermoleovorans group</taxon>
    </lineage>
</organism>
<reference key="1">
    <citation type="journal article" date="2004" name="Nucleic Acids Res.">
        <title>Thermoadaptation trait revealed by the genome sequence of thermophilic Geobacillus kaustophilus.</title>
        <authorList>
            <person name="Takami H."/>
            <person name="Takaki Y."/>
            <person name="Chee G.-J."/>
            <person name="Nishi S."/>
            <person name="Shimamura S."/>
            <person name="Suzuki H."/>
            <person name="Matsui S."/>
            <person name="Uchiyama I."/>
        </authorList>
    </citation>
    <scope>NUCLEOTIDE SEQUENCE [LARGE SCALE GENOMIC DNA]</scope>
    <source>
        <strain>HTA426</strain>
    </source>
</reference>
<proteinExistence type="inferred from homology"/>
<evidence type="ECO:0000255" key="1">
    <source>
        <dbReference type="HAMAP-Rule" id="MF_00300"/>
    </source>
</evidence>
<comment type="function">
    <text evidence="1">Catalyzes the anti-1,4-elimination of the C-3 phosphate and the C-6 proR hydrogen from 5-enolpyruvylshikimate-3-phosphate (EPSP) to yield chorismate, which is the branch point compound that serves as the starting substrate for the three terminal pathways of aromatic amino acid biosynthesis. This reaction introduces a second double bond into the aromatic ring system.</text>
</comment>
<comment type="catalytic activity">
    <reaction evidence="1">
        <text>5-O-(1-carboxyvinyl)-3-phosphoshikimate = chorismate + phosphate</text>
        <dbReference type="Rhea" id="RHEA:21020"/>
        <dbReference type="ChEBI" id="CHEBI:29748"/>
        <dbReference type="ChEBI" id="CHEBI:43474"/>
        <dbReference type="ChEBI" id="CHEBI:57701"/>
        <dbReference type="EC" id="4.2.3.5"/>
    </reaction>
</comment>
<comment type="cofactor">
    <cofactor evidence="1">
        <name>FMNH2</name>
        <dbReference type="ChEBI" id="CHEBI:57618"/>
    </cofactor>
    <text evidence="1">Reduced FMN (FMNH(2)).</text>
</comment>
<comment type="pathway">
    <text evidence="1">Metabolic intermediate biosynthesis; chorismate biosynthesis; chorismate from D-erythrose 4-phosphate and phosphoenolpyruvate: step 7/7.</text>
</comment>
<comment type="subunit">
    <text evidence="1">Homotetramer.</text>
</comment>
<comment type="similarity">
    <text evidence="1">Belongs to the chorismate synthase family.</text>
</comment>
<gene>
    <name evidence="1" type="primary">aroC</name>
    <name type="ordered locus">GK2207</name>
</gene>
<accession>Q5KXU4</accession>
<feature type="chain" id="PRO_0000140590" description="Chorismate synthase">
    <location>
        <begin position="1"/>
        <end position="388"/>
    </location>
</feature>
<feature type="binding site" evidence="1">
    <location>
        <position position="39"/>
    </location>
    <ligand>
        <name>NADP(+)</name>
        <dbReference type="ChEBI" id="CHEBI:58349"/>
    </ligand>
</feature>
<feature type="binding site" evidence="1">
    <location>
        <position position="45"/>
    </location>
    <ligand>
        <name>NADP(+)</name>
        <dbReference type="ChEBI" id="CHEBI:58349"/>
    </ligand>
</feature>
<feature type="binding site" evidence="1">
    <location>
        <begin position="130"/>
        <end position="132"/>
    </location>
    <ligand>
        <name>FMN</name>
        <dbReference type="ChEBI" id="CHEBI:58210"/>
    </ligand>
</feature>
<feature type="binding site" evidence="1">
    <location>
        <begin position="251"/>
        <end position="252"/>
    </location>
    <ligand>
        <name>FMN</name>
        <dbReference type="ChEBI" id="CHEBI:58210"/>
    </ligand>
</feature>
<feature type="binding site" evidence="1">
    <location>
        <position position="296"/>
    </location>
    <ligand>
        <name>FMN</name>
        <dbReference type="ChEBI" id="CHEBI:58210"/>
    </ligand>
</feature>
<feature type="binding site" evidence="1">
    <location>
        <begin position="311"/>
        <end position="315"/>
    </location>
    <ligand>
        <name>FMN</name>
        <dbReference type="ChEBI" id="CHEBI:58210"/>
    </ligand>
</feature>
<feature type="binding site" evidence="1">
    <location>
        <position position="337"/>
    </location>
    <ligand>
        <name>FMN</name>
        <dbReference type="ChEBI" id="CHEBI:58210"/>
    </ligand>
</feature>
<sequence>MRYLTAGESHGPQLTAILEGVPAGLELRAEHINKELARRQKGYGRGRRMQIEKDEVKITGGVRHGKTLGSPIALVVENRDFKHWQTIMAVEPIDDEAEVKRKVTRPRPGHADLNGALKYGHRDMRNVLERSSARETTVRVAAGAVAKRILEEVGIRVAGHVIEIGGVRAKKLDYRSLEELQAVTEESPVRCFDPEAGQKMMEAIDWAKKNGDSIGGIVEVIVEGVPAGVGSYVHYDRKLDAKIAAAIVSINAFKGVEFGIGFEAARRPGSEVHDEIIWSPEQGFSRRTNRAGGFEGGVTTGMPIVVRGVMKPIPTLYKPLQSVDIETKEPFAASIERSDSCAVPAASVVAEAVVAWEVAAAIVEQFGQDRMDLIKENVERARRYAKEF</sequence>
<dbReference type="EC" id="4.2.3.5" evidence="1"/>
<dbReference type="EMBL" id="BA000043">
    <property type="protein sequence ID" value="BAD76492.1"/>
    <property type="molecule type" value="Genomic_DNA"/>
</dbReference>
<dbReference type="RefSeq" id="WP_011231692.1">
    <property type="nucleotide sequence ID" value="NC_006510.1"/>
</dbReference>
<dbReference type="SMR" id="Q5KXU4"/>
<dbReference type="STRING" id="235909.GK2207"/>
<dbReference type="GeneID" id="32064059"/>
<dbReference type="KEGG" id="gka:GK2207"/>
<dbReference type="eggNOG" id="COG0082">
    <property type="taxonomic scope" value="Bacteria"/>
</dbReference>
<dbReference type="HOGENOM" id="CLU_034547_2_0_9"/>
<dbReference type="UniPathway" id="UPA00053">
    <property type="reaction ID" value="UER00090"/>
</dbReference>
<dbReference type="Proteomes" id="UP000001172">
    <property type="component" value="Chromosome"/>
</dbReference>
<dbReference type="GO" id="GO:0005829">
    <property type="term" value="C:cytosol"/>
    <property type="evidence" value="ECO:0007669"/>
    <property type="project" value="TreeGrafter"/>
</dbReference>
<dbReference type="GO" id="GO:0004107">
    <property type="term" value="F:chorismate synthase activity"/>
    <property type="evidence" value="ECO:0007669"/>
    <property type="project" value="UniProtKB-UniRule"/>
</dbReference>
<dbReference type="GO" id="GO:0010181">
    <property type="term" value="F:FMN binding"/>
    <property type="evidence" value="ECO:0007669"/>
    <property type="project" value="TreeGrafter"/>
</dbReference>
<dbReference type="GO" id="GO:0008652">
    <property type="term" value="P:amino acid biosynthetic process"/>
    <property type="evidence" value="ECO:0007669"/>
    <property type="project" value="UniProtKB-KW"/>
</dbReference>
<dbReference type="GO" id="GO:0009073">
    <property type="term" value="P:aromatic amino acid family biosynthetic process"/>
    <property type="evidence" value="ECO:0007669"/>
    <property type="project" value="UniProtKB-KW"/>
</dbReference>
<dbReference type="GO" id="GO:0009423">
    <property type="term" value="P:chorismate biosynthetic process"/>
    <property type="evidence" value="ECO:0007669"/>
    <property type="project" value="UniProtKB-UniRule"/>
</dbReference>
<dbReference type="CDD" id="cd07304">
    <property type="entry name" value="Chorismate_synthase"/>
    <property type="match status" value="1"/>
</dbReference>
<dbReference type="FunFam" id="3.60.150.10:FF:000002">
    <property type="entry name" value="Chorismate synthase"/>
    <property type="match status" value="1"/>
</dbReference>
<dbReference type="Gene3D" id="3.60.150.10">
    <property type="entry name" value="Chorismate synthase AroC"/>
    <property type="match status" value="1"/>
</dbReference>
<dbReference type="HAMAP" id="MF_00300">
    <property type="entry name" value="Chorismate_synth"/>
    <property type="match status" value="1"/>
</dbReference>
<dbReference type="InterPro" id="IPR000453">
    <property type="entry name" value="Chorismate_synth"/>
</dbReference>
<dbReference type="InterPro" id="IPR035904">
    <property type="entry name" value="Chorismate_synth_AroC_sf"/>
</dbReference>
<dbReference type="InterPro" id="IPR020541">
    <property type="entry name" value="Chorismate_synthase_CS"/>
</dbReference>
<dbReference type="NCBIfam" id="TIGR00033">
    <property type="entry name" value="aroC"/>
    <property type="match status" value="1"/>
</dbReference>
<dbReference type="NCBIfam" id="NF003793">
    <property type="entry name" value="PRK05382.1"/>
    <property type="match status" value="1"/>
</dbReference>
<dbReference type="PANTHER" id="PTHR21085">
    <property type="entry name" value="CHORISMATE SYNTHASE"/>
    <property type="match status" value="1"/>
</dbReference>
<dbReference type="PANTHER" id="PTHR21085:SF0">
    <property type="entry name" value="CHORISMATE SYNTHASE"/>
    <property type="match status" value="1"/>
</dbReference>
<dbReference type="Pfam" id="PF01264">
    <property type="entry name" value="Chorismate_synt"/>
    <property type="match status" value="1"/>
</dbReference>
<dbReference type="PIRSF" id="PIRSF001456">
    <property type="entry name" value="Chorismate_synth"/>
    <property type="match status" value="1"/>
</dbReference>
<dbReference type="SUPFAM" id="SSF103263">
    <property type="entry name" value="Chorismate synthase, AroC"/>
    <property type="match status" value="1"/>
</dbReference>
<dbReference type="PROSITE" id="PS00787">
    <property type="entry name" value="CHORISMATE_SYNTHASE_1"/>
    <property type="match status" value="1"/>
</dbReference>
<dbReference type="PROSITE" id="PS00788">
    <property type="entry name" value="CHORISMATE_SYNTHASE_2"/>
    <property type="match status" value="1"/>
</dbReference>
<dbReference type="PROSITE" id="PS00789">
    <property type="entry name" value="CHORISMATE_SYNTHASE_3"/>
    <property type="match status" value="1"/>
</dbReference>
<protein>
    <recommendedName>
        <fullName evidence="1">Chorismate synthase</fullName>
        <shortName evidence="1">CS</shortName>
        <ecNumber evidence="1">4.2.3.5</ecNumber>
    </recommendedName>
    <alternativeName>
        <fullName evidence="1">5-enolpyruvylshikimate-3-phosphate phospholyase</fullName>
    </alternativeName>
</protein>
<keyword id="KW-0028">Amino-acid biosynthesis</keyword>
<keyword id="KW-0057">Aromatic amino acid biosynthesis</keyword>
<keyword id="KW-0274">FAD</keyword>
<keyword id="KW-0285">Flavoprotein</keyword>
<keyword id="KW-0288">FMN</keyword>
<keyword id="KW-0456">Lyase</keyword>
<keyword id="KW-0521">NADP</keyword>
<keyword id="KW-1185">Reference proteome</keyword>